<organism>
    <name type="scientific">Dictyostelium discoideum</name>
    <name type="common">Social amoeba</name>
    <dbReference type="NCBI Taxonomy" id="44689"/>
    <lineage>
        <taxon>Eukaryota</taxon>
        <taxon>Amoebozoa</taxon>
        <taxon>Evosea</taxon>
        <taxon>Eumycetozoa</taxon>
        <taxon>Dictyostelia</taxon>
        <taxon>Dictyosteliales</taxon>
        <taxon>Dictyosteliaceae</taxon>
        <taxon>Dictyostelium</taxon>
    </lineage>
</organism>
<evidence type="ECO:0000250" key="1">
    <source>
        <dbReference type="UniProtKB" id="O35129"/>
    </source>
</evidence>
<evidence type="ECO:0000250" key="2">
    <source>
        <dbReference type="UniProtKB" id="P50093"/>
    </source>
</evidence>
<evidence type="ECO:0000250" key="3">
    <source>
        <dbReference type="UniProtKB" id="Q99623"/>
    </source>
</evidence>
<evidence type="ECO:0000255" key="4"/>
<evidence type="ECO:0000305" key="5"/>
<proteinExistence type="inferred from homology"/>
<reference key="1">
    <citation type="journal article" date="2005" name="Nature">
        <title>The genome of the social amoeba Dictyostelium discoideum.</title>
        <authorList>
            <person name="Eichinger L."/>
            <person name="Pachebat J.A."/>
            <person name="Gloeckner G."/>
            <person name="Rajandream M.A."/>
            <person name="Sucgang R."/>
            <person name="Berriman M."/>
            <person name="Song J."/>
            <person name="Olsen R."/>
            <person name="Szafranski K."/>
            <person name="Xu Q."/>
            <person name="Tunggal B."/>
            <person name="Kummerfeld S."/>
            <person name="Madera M."/>
            <person name="Konfortov B.A."/>
            <person name="Rivero F."/>
            <person name="Bankier A.T."/>
            <person name="Lehmann R."/>
            <person name="Hamlin N."/>
            <person name="Davies R."/>
            <person name="Gaudet P."/>
            <person name="Fey P."/>
            <person name="Pilcher K."/>
            <person name="Chen G."/>
            <person name="Saunders D."/>
            <person name="Sodergren E.J."/>
            <person name="Davis P."/>
            <person name="Kerhornou A."/>
            <person name="Nie X."/>
            <person name="Hall N."/>
            <person name="Anjard C."/>
            <person name="Hemphill L."/>
            <person name="Bason N."/>
            <person name="Farbrother P."/>
            <person name="Desany B."/>
            <person name="Just E."/>
            <person name="Morio T."/>
            <person name="Rost R."/>
            <person name="Churcher C.M."/>
            <person name="Cooper J."/>
            <person name="Haydock S."/>
            <person name="van Driessche N."/>
            <person name="Cronin A."/>
            <person name="Goodhead I."/>
            <person name="Muzny D.M."/>
            <person name="Mourier T."/>
            <person name="Pain A."/>
            <person name="Lu M."/>
            <person name="Harper D."/>
            <person name="Lindsay R."/>
            <person name="Hauser H."/>
            <person name="James K.D."/>
            <person name="Quiles M."/>
            <person name="Madan Babu M."/>
            <person name="Saito T."/>
            <person name="Buchrieser C."/>
            <person name="Wardroper A."/>
            <person name="Felder M."/>
            <person name="Thangavelu M."/>
            <person name="Johnson D."/>
            <person name="Knights A."/>
            <person name="Loulseged H."/>
            <person name="Mungall K.L."/>
            <person name="Oliver K."/>
            <person name="Price C."/>
            <person name="Quail M.A."/>
            <person name="Urushihara H."/>
            <person name="Hernandez J."/>
            <person name="Rabbinowitsch E."/>
            <person name="Steffen D."/>
            <person name="Sanders M."/>
            <person name="Ma J."/>
            <person name="Kohara Y."/>
            <person name="Sharp S."/>
            <person name="Simmonds M.N."/>
            <person name="Spiegler S."/>
            <person name="Tivey A."/>
            <person name="Sugano S."/>
            <person name="White B."/>
            <person name="Walker D."/>
            <person name="Woodward J.R."/>
            <person name="Winckler T."/>
            <person name="Tanaka Y."/>
            <person name="Shaulsky G."/>
            <person name="Schleicher M."/>
            <person name="Weinstock G.M."/>
            <person name="Rosenthal A."/>
            <person name="Cox E.C."/>
            <person name="Chisholm R.L."/>
            <person name="Gibbs R.A."/>
            <person name="Loomis W.F."/>
            <person name="Platzer M."/>
            <person name="Kay R.R."/>
            <person name="Williams J.G."/>
            <person name="Dear P.H."/>
            <person name="Noegel A.A."/>
            <person name="Barrell B.G."/>
            <person name="Kuspa A."/>
        </authorList>
    </citation>
    <scope>NUCLEOTIDE SEQUENCE [LARGE SCALE GENOMIC DNA]</scope>
    <source>
        <strain>AX4</strain>
    </source>
</reference>
<feature type="chain" id="PRO_0000327659" description="Prohibitin-2">
    <location>
        <begin position="1"/>
        <end position="293"/>
    </location>
</feature>
<feature type="transmembrane region" description="Helical; Signal-anchor for type II membrane protein" evidence="4">
    <location>
        <begin position="21"/>
        <end position="41"/>
    </location>
</feature>
<feature type="coiled-coil region" evidence="4">
    <location>
        <begin position="190"/>
        <end position="235"/>
    </location>
</feature>
<comment type="function">
    <text evidence="3">Protein with pleiotropic attributes mediated in a cell-compartment- and tissue-specific manner, which include the plasma membrane-associated cell signaling functions, mitochondrial chaperone, and transcriptional co-regulator of transcription factors and sex steroid hormones in the nucleus.</text>
</comment>
<comment type="function">
    <text evidence="3">In the mitochondria, together with PHB, forms large ring complexes (prohibitin complexes) in the inner mitochondrial membrane (IMM) and functions as a chaperone protein that stabilizes mitochondrial respiratory enzymes and maintains mitochondrial integrity in the IMM, which is required for mitochondrial morphogenesis, neuronal survival, and normal lifespan.</text>
</comment>
<comment type="function">
    <text evidence="3">In the nucleus, serves as transcriptional co-regulator.</text>
</comment>
<comment type="subunit">
    <text evidence="3">The mitochondrial prohibitin complex consists of two subunits (PHB1 and PHB2), assembled into a membrane-associated ring-shaped supercomplex of approximately 1 mDa.</text>
</comment>
<comment type="subcellular location">
    <subcellularLocation>
        <location evidence="1">Mitochondrion inner membrane</location>
        <topology evidence="2">Single-pass type II membrane protein</topology>
        <orientation evidence="2">Intermembrane side</orientation>
    </subcellularLocation>
    <subcellularLocation>
        <location evidence="1">Cytoplasm</location>
    </subcellularLocation>
    <subcellularLocation>
        <location evidence="1">Nucleus</location>
    </subcellularLocation>
    <subcellularLocation>
        <location evidence="3">Cell membrane</location>
    </subcellularLocation>
</comment>
<comment type="similarity">
    <text evidence="5">Belongs to the prohibitin family.</text>
</comment>
<sequence>MNNKKFQVNFNNIPKLPKGSFGGGFGLLALGGVGLLALSSLVNVEGGHRAIVFNRFVGIKNKVYNEGTHFIVPWFERAEIYDVRAKPRSISSLTGSKDLQMVNITIRVLSKPKVSQLPAIYRTLGKDYDERVLPSIVNEILKSIVAQFNASQLITQREQVSRLIFKRLVDRAKDFNIELDDVSITHLNFGREYAAAIEAKQVAQQEAERARFLVEKALQDKRSIIVKAEGEAQSAQLINDAIKQSPYLVQLRTLEASKEIAHILSKSPNKLYISNETLLLNGFDLNNNQQPKK</sequence>
<name>PHB2_DICDI</name>
<gene>
    <name type="primary">phbB</name>
    <name type="ORF">DDB_G0284117</name>
</gene>
<keyword id="KW-1003">Cell membrane</keyword>
<keyword id="KW-0175">Coiled coil</keyword>
<keyword id="KW-0963">Cytoplasm</keyword>
<keyword id="KW-0472">Membrane</keyword>
<keyword id="KW-0496">Mitochondrion</keyword>
<keyword id="KW-0999">Mitochondrion inner membrane</keyword>
<keyword id="KW-0539">Nucleus</keyword>
<keyword id="KW-1185">Reference proteome</keyword>
<keyword id="KW-0735">Signal-anchor</keyword>
<keyword id="KW-0812">Transmembrane</keyword>
<keyword id="KW-1133">Transmembrane helix</keyword>
<protein>
    <recommendedName>
        <fullName>Prohibitin-2</fullName>
    </recommendedName>
</protein>
<dbReference type="EMBL" id="AAFI02000063">
    <property type="protein sequence ID" value="EAL65399.1"/>
    <property type="molecule type" value="Genomic_DNA"/>
</dbReference>
<dbReference type="RefSeq" id="XP_638766.1">
    <property type="nucleotide sequence ID" value="XM_633674.1"/>
</dbReference>
<dbReference type="SMR" id="Q54Q31"/>
<dbReference type="FunCoup" id="Q54Q31">
    <property type="interactions" value="769"/>
</dbReference>
<dbReference type="STRING" id="44689.Q54Q31"/>
<dbReference type="PaxDb" id="44689-DDB0232062"/>
<dbReference type="EnsemblProtists" id="EAL65399">
    <property type="protein sequence ID" value="EAL65399"/>
    <property type="gene ID" value="DDB_G0284117"/>
</dbReference>
<dbReference type="GeneID" id="8624437"/>
<dbReference type="KEGG" id="ddi:DDB_G0284117"/>
<dbReference type="dictyBase" id="DDB_G0284117">
    <property type="gene designation" value="phbB"/>
</dbReference>
<dbReference type="VEuPathDB" id="AmoebaDB:DDB_G0284117"/>
<dbReference type="eggNOG" id="KOG3090">
    <property type="taxonomic scope" value="Eukaryota"/>
</dbReference>
<dbReference type="HOGENOM" id="CLU_047969_0_2_1"/>
<dbReference type="InParanoid" id="Q54Q31"/>
<dbReference type="OMA" id="NEGTHFQ"/>
<dbReference type="PhylomeDB" id="Q54Q31"/>
<dbReference type="PRO" id="PR:Q54Q31"/>
<dbReference type="Proteomes" id="UP000002195">
    <property type="component" value="Chromosome 4"/>
</dbReference>
<dbReference type="GO" id="GO:0009986">
    <property type="term" value="C:cell surface"/>
    <property type="evidence" value="ECO:0000250"/>
    <property type="project" value="UniProtKB"/>
</dbReference>
<dbReference type="GO" id="GO:0005737">
    <property type="term" value="C:cytoplasm"/>
    <property type="evidence" value="ECO:0000250"/>
    <property type="project" value="UniProtKB"/>
</dbReference>
<dbReference type="GO" id="GO:0005743">
    <property type="term" value="C:mitochondrial inner membrane"/>
    <property type="evidence" value="ECO:0000250"/>
    <property type="project" value="UniProtKB"/>
</dbReference>
<dbReference type="GO" id="GO:0035632">
    <property type="term" value="C:mitochondrial prohibitin complex"/>
    <property type="evidence" value="ECO:0000250"/>
    <property type="project" value="UniProtKB"/>
</dbReference>
<dbReference type="GO" id="GO:0005739">
    <property type="term" value="C:mitochondrion"/>
    <property type="evidence" value="ECO:0000318"/>
    <property type="project" value="GO_Central"/>
</dbReference>
<dbReference type="GO" id="GO:0005634">
    <property type="term" value="C:nucleus"/>
    <property type="evidence" value="ECO:0007669"/>
    <property type="project" value="UniProtKB-SubCell"/>
</dbReference>
<dbReference type="GO" id="GO:0005886">
    <property type="term" value="C:plasma membrane"/>
    <property type="evidence" value="ECO:0000250"/>
    <property type="project" value="UniProtKB"/>
</dbReference>
<dbReference type="GO" id="GO:0007005">
    <property type="term" value="P:mitochondrion organization"/>
    <property type="evidence" value="ECO:0000318"/>
    <property type="project" value="GO_Central"/>
</dbReference>
<dbReference type="GO" id="GO:0000423">
    <property type="term" value="P:mitophagy"/>
    <property type="evidence" value="ECO:0000250"/>
    <property type="project" value="UniProtKB"/>
</dbReference>
<dbReference type="CDD" id="cd03401">
    <property type="entry name" value="SPFH_prohibitin"/>
    <property type="match status" value="1"/>
</dbReference>
<dbReference type="FunFam" id="3.30.479.30:FF:000001">
    <property type="entry name" value="Prohibitin 2"/>
    <property type="match status" value="1"/>
</dbReference>
<dbReference type="Gene3D" id="3.30.479.30">
    <property type="entry name" value="Band 7 domain"/>
    <property type="match status" value="1"/>
</dbReference>
<dbReference type="InterPro" id="IPR001107">
    <property type="entry name" value="Band_7"/>
</dbReference>
<dbReference type="InterPro" id="IPR036013">
    <property type="entry name" value="Band_7/SPFH_dom_sf"/>
</dbReference>
<dbReference type="InterPro" id="IPR000163">
    <property type="entry name" value="Prohibitin"/>
</dbReference>
<dbReference type="PANTHER" id="PTHR23222">
    <property type="entry name" value="PROHIBITIN"/>
    <property type="match status" value="1"/>
</dbReference>
<dbReference type="PANTHER" id="PTHR23222:SF1">
    <property type="entry name" value="PROHIBITIN-2"/>
    <property type="match status" value="1"/>
</dbReference>
<dbReference type="Pfam" id="PF01145">
    <property type="entry name" value="Band_7"/>
    <property type="match status" value="1"/>
</dbReference>
<dbReference type="PRINTS" id="PR00679">
    <property type="entry name" value="PROHIBITIN"/>
</dbReference>
<dbReference type="SMART" id="SM00244">
    <property type="entry name" value="PHB"/>
    <property type="match status" value="1"/>
</dbReference>
<dbReference type="SUPFAM" id="SSF117892">
    <property type="entry name" value="Band 7/SPFH domain"/>
    <property type="match status" value="1"/>
</dbReference>
<accession>Q54Q31</accession>